<name>RP147_MONPV</name>
<organism>
    <name type="scientific">Monkeypox virus</name>
    <dbReference type="NCBI Taxonomy" id="10244"/>
    <lineage>
        <taxon>Viruses</taxon>
        <taxon>Varidnaviria</taxon>
        <taxon>Bamfordvirae</taxon>
        <taxon>Nucleocytoviricota</taxon>
        <taxon>Pokkesviricetes</taxon>
        <taxon>Chitovirales</taxon>
        <taxon>Poxviridae</taxon>
        <taxon>Chordopoxvirinae</taxon>
        <taxon>Orthopoxvirus</taxon>
    </lineage>
</organism>
<protein>
    <recommendedName>
        <fullName>DNA-directed RNA polymerase 147 kDa polypeptide</fullName>
        <ecNumber>2.7.7.6</ecNumber>
    </recommendedName>
</protein>
<keyword id="KW-0240">DNA-directed RNA polymerase</keyword>
<keyword id="KW-0548">Nucleotidyltransferase</keyword>
<keyword id="KW-1185">Reference proteome</keyword>
<keyword id="KW-0804">Transcription</keyword>
<keyword id="KW-0808">Transferase</keyword>
<keyword id="KW-0946">Virion</keyword>
<organismHost>
    <name type="scientific">Cynomys gunnisoni</name>
    <name type="common">Gunnison's prairie dog</name>
    <name type="synonym">Spermophilus gunnisoni</name>
    <dbReference type="NCBI Taxonomy" id="45479"/>
</organismHost>
<organismHost>
    <name type="scientific">Cynomys leucurus</name>
    <name type="common">White-tailed prairie dog</name>
    <dbReference type="NCBI Taxonomy" id="99825"/>
</organismHost>
<organismHost>
    <name type="scientific">Cynomys ludovicianus</name>
    <name type="common">Black-tailed prairie dog</name>
    <dbReference type="NCBI Taxonomy" id="45480"/>
</organismHost>
<organismHost>
    <name type="scientific">Cynomys mexicanus</name>
    <name type="common">Mexican prairie dog</name>
    <dbReference type="NCBI Taxonomy" id="99826"/>
</organismHost>
<organismHost>
    <name type="scientific">Cynomys parvidens</name>
    <name type="common">Utah prairie dog</name>
    <dbReference type="NCBI Taxonomy" id="99827"/>
</organismHost>
<organismHost>
    <name type="scientific">Gliridae</name>
    <name type="common">dormice</name>
    <dbReference type="NCBI Taxonomy" id="30650"/>
</organismHost>
<organismHost>
    <name type="scientific">Heliosciurus ruwenzorii</name>
    <name type="common">Ruwenzori sun squirrel</name>
    <dbReference type="NCBI Taxonomy" id="226685"/>
</organismHost>
<organismHost>
    <name type="scientific">Homo sapiens</name>
    <name type="common">Human</name>
    <dbReference type="NCBI Taxonomy" id="9606"/>
</organismHost>
<organismHost>
    <name type="scientific">Mus musculus</name>
    <name type="common">Mouse</name>
    <dbReference type="NCBI Taxonomy" id="10090"/>
</organismHost>
<reference key="1">
    <citation type="journal article" date="2022" name="J. Infect. Dis.">
        <title>Exportation of Monkeypox virus from the African continent.</title>
        <authorList>
            <person name="Mauldin M.R."/>
            <person name="McCollum A.M."/>
            <person name="Nakazawa Y.J."/>
            <person name="Mandra A."/>
            <person name="Whitehouse E.R."/>
            <person name="Davidson W."/>
            <person name="Zhao H."/>
            <person name="Gao J."/>
            <person name="Li Y."/>
            <person name="Doty J."/>
            <person name="Yinka-Ogunleye A."/>
            <person name="Akinpelu A."/>
            <person name="Aruna O."/>
            <person name="Naidoo D."/>
            <person name="Lewandowski K."/>
            <person name="Afrough B."/>
            <person name="Graham V."/>
            <person name="Aarons E."/>
            <person name="Hewson R."/>
            <person name="Vipond R."/>
            <person name="Dunning J."/>
            <person name="Chand M."/>
            <person name="Brown C."/>
            <person name="Cohen-Gihon I."/>
            <person name="Erez N."/>
            <person name="Shifman O."/>
            <person name="Israeli O."/>
            <person name="Sharon M."/>
            <person name="Schwartz E."/>
            <person name="Beth-Din A."/>
            <person name="Zvi A."/>
            <person name="Mak T.M."/>
            <person name="Ng Y.K."/>
            <person name="Cui L."/>
            <person name="Lin R.T.P."/>
            <person name="Olson V.A."/>
            <person name="Brooks T."/>
            <person name="Paran N."/>
            <person name="Ihekweazu C."/>
            <person name="Reynolds M.G."/>
        </authorList>
    </citation>
    <scope>NUCLEOTIDE SEQUENCE [LARGE SCALE GENOMIC DNA]</scope>
    <source>
        <strain>MPXV-M5312_HM12_Rivers</strain>
    </source>
</reference>
<dbReference type="EC" id="2.7.7.6"/>
<dbReference type="EMBL" id="MT903340">
    <property type="protein sequence ID" value="QNP12960.1"/>
    <property type="molecule type" value="Genomic_DNA"/>
</dbReference>
<dbReference type="RefSeq" id="YP_010377087.1">
    <property type="nucleotide sequence ID" value="NC_063383.1"/>
</dbReference>
<dbReference type="SMR" id="A0A7H0DN77"/>
<dbReference type="GeneID" id="72551500"/>
<dbReference type="Proteomes" id="UP000516359">
    <property type="component" value="Genome"/>
</dbReference>
<dbReference type="GO" id="GO:0000428">
    <property type="term" value="C:DNA-directed RNA polymerase complex"/>
    <property type="evidence" value="ECO:0007669"/>
    <property type="project" value="UniProtKB-KW"/>
</dbReference>
<dbReference type="GO" id="GO:0044423">
    <property type="term" value="C:virion component"/>
    <property type="evidence" value="ECO:0007669"/>
    <property type="project" value="UniProtKB-KW"/>
</dbReference>
<dbReference type="GO" id="GO:0003677">
    <property type="term" value="F:DNA binding"/>
    <property type="evidence" value="ECO:0007669"/>
    <property type="project" value="InterPro"/>
</dbReference>
<dbReference type="GO" id="GO:0003899">
    <property type="term" value="F:DNA-directed RNA polymerase activity"/>
    <property type="evidence" value="ECO:0007669"/>
    <property type="project" value="InterPro"/>
</dbReference>
<dbReference type="GO" id="GO:0006351">
    <property type="term" value="P:DNA-templated transcription"/>
    <property type="evidence" value="ECO:0007669"/>
    <property type="project" value="InterPro"/>
</dbReference>
<dbReference type="Gene3D" id="1.10.132.30">
    <property type="match status" value="1"/>
</dbReference>
<dbReference type="Gene3D" id="2.40.40.20">
    <property type="match status" value="1"/>
</dbReference>
<dbReference type="Gene3D" id="6.10.250.2940">
    <property type="match status" value="1"/>
</dbReference>
<dbReference type="Gene3D" id="3.30.1490.180">
    <property type="entry name" value="RNA polymerase ii"/>
    <property type="match status" value="1"/>
</dbReference>
<dbReference type="Gene3D" id="4.10.860.120">
    <property type="entry name" value="RNA polymerase II, clamp domain"/>
    <property type="match status" value="1"/>
</dbReference>
<dbReference type="InterPro" id="IPR045867">
    <property type="entry name" value="DNA-dir_RpoC_beta_prime"/>
</dbReference>
<dbReference type="InterPro" id="IPR000722">
    <property type="entry name" value="RNA_pol_asu"/>
</dbReference>
<dbReference type="InterPro" id="IPR006592">
    <property type="entry name" value="RNA_pol_N"/>
</dbReference>
<dbReference type="InterPro" id="IPR007080">
    <property type="entry name" value="RNA_pol_Rpb1_1"/>
</dbReference>
<dbReference type="InterPro" id="IPR007066">
    <property type="entry name" value="RNA_pol_Rpb1_3"/>
</dbReference>
<dbReference type="InterPro" id="IPR007083">
    <property type="entry name" value="RNA_pol_Rpb1_4"/>
</dbReference>
<dbReference type="InterPro" id="IPR007081">
    <property type="entry name" value="RNA_pol_Rpb1_5"/>
</dbReference>
<dbReference type="InterPro" id="IPR044893">
    <property type="entry name" value="RNA_pol_Rpb1_clamp_domain"/>
</dbReference>
<dbReference type="InterPro" id="IPR038120">
    <property type="entry name" value="Rpb1_funnel_sf"/>
</dbReference>
<dbReference type="PANTHER" id="PTHR19376">
    <property type="entry name" value="DNA-DIRECTED RNA POLYMERASE"/>
    <property type="match status" value="1"/>
</dbReference>
<dbReference type="PANTHER" id="PTHR19376:SF32">
    <property type="entry name" value="DNA-DIRECTED RNA POLYMERASE III SUBUNIT RPC1"/>
    <property type="match status" value="1"/>
</dbReference>
<dbReference type="Pfam" id="PF04997">
    <property type="entry name" value="RNA_pol_Rpb1_1"/>
    <property type="match status" value="1"/>
</dbReference>
<dbReference type="Pfam" id="PF00623">
    <property type="entry name" value="RNA_pol_Rpb1_2"/>
    <property type="match status" value="1"/>
</dbReference>
<dbReference type="Pfam" id="PF04983">
    <property type="entry name" value="RNA_pol_Rpb1_3"/>
    <property type="match status" value="1"/>
</dbReference>
<dbReference type="Pfam" id="PF05000">
    <property type="entry name" value="RNA_pol_Rpb1_4"/>
    <property type="match status" value="1"/>
</dbReference>
<dbReference type="Pfam" id="PF04998">
    <property type="entry name" value="RNA_pol_Rpb1_5"/>
    <property type="match status" value="1"/>
</dbReference>
<dbReference type="SMART" id="SM00663">
    <property type="entry name" value="RPOLA_N"/>
    <property type="match status" value="1"/>
</dbReference>
<dbReference type="SUPFAM" id="SSF64484">
    <property type="entry name" value="beta and beta-prime subunits of DNA dependent RNA-polymerase"/>
    <property type="match status" value="1"/>
</dbReference>
<sequence length="1286" mass="146870">MAVISKVTYSLYDQKEINATDIIISHIKNDDDIGTVKDGRLGAMDGALCKTCGKTELECFGHWGKVSIYKTHIVKPEFISEIIRLLNHICIHCGLLRSREPYSDDINLKELSVHALRRLKDKILSKKKSCWNSECMQPYQKITFSKKKVCFVNKLDDINVPNSLIYQKLISIHEKFWPLLEIHQYPANLFYTDYFPIPPLIIRPAISFWIDSIPKETNELTYLLGMIVKNCNLNADEQVIQKAVIEYDDIKIISNNTTSINLSYITSGKNNMIRSYIVARRKDQTARSVIGPSTSITVNEVGMPTYIRNTLTEKIFVNAFTVDKVKQLLASNQVKFYFNKRLNQLTRIRQGKFIKNKIHLLPGDWVEVAVQEYTSIIFGRQPSLHRYNVIASSIRATEGDTIKISPGIANSQNADFDGDEEWMILEQNPKAVVEQSILMYPTTLLKHDIHGAPVYGSIQDEIVAAYSLFRIQDLCLDEVLNILGKYGREFDPKGKCKFSGKDIYTYLIGEKINYPGLLKDGEIIANDVDSNFVVAMRHLSLAGLLSDHKSNVEGINFIIKSSYVFKRYLSIYGFGVTFKDLRPNSTFTNKLEAINVEKIELIKEAYAKYLKDVRDGKIVPLSKALEADYLESMLSNLTNLNIREIEEHMRQTLIDDPDNNLLKMAKAGYKVNPTELMYILGTYGQQRIDGEPAETRVLGRVLPYYLPDSKDPEGRGYILNSLTKGLTGSQYYFSMLVARSQSTDIVCETSRTGTLARKIIKKMEDMVVDGYGQVVIGNTLIKYAANYTKILGSVCKPVDLIYPDESMTWYLEISALWNKIKQGFVYSQKQKLAKKTLAPFNFLVFVKPTTEDNAIKVKDLYDMIHNVIDDVREKYFFTVSNIDFMEYIFLTHLNPSRIRITKETAITIFEKFYEKLNYTLGGGTPIGIISAQVLSEKFTQQALSSFHTTEKSGAVKQKLGFNEFNNLTNLSKNKTEIITLVSDDISKLQSVKINFEFVCLGELNPDITLRKETDRYVVDIIVNRLYIKRAEITELVVEYMIERFISFSVIVKEWGMETFIEDEDNIRFTIYLNFVEPEELNLSKFMMVLPGAANKGKISKFKIPISDYTGYNDFNQTKKLNKMTVELMNLKELGSFDLENVNVYPGVWNTYDIFGIEAARGYLCEAMLNTYGEGFDYLYQPCDLLASLLCASYEPESVNKFKFGAASTLKRATFGDNKALLNAALHKKSEPINDNSSCHFFSKVPNIGTGYYKYFIDLGLLMRMERKLSDKISSQKIKEIEETEDF</sequence>
<accession>A0A7H0DN77</accession>
<evidence type="ECO:0000250" key="1">
    <source>
        <dbReference type="UniProtKB" id="O57204"/>
    </source>
</evidence>
<evidence type="ECO:0000305" key="2"/>
<gene>
    <name type="primary">OPG105</name>
    <name type="synonym">RPO147</name>
    <name type="ORF">MPXVgp090</name>
</gene>
<feature type="chain" id="PRO_0000457418" description="DNA-directed RNA polymerase 147 kDa polypeptide">
    <location>
        <begin position="1"/>
        <end position="1286"/>
    </location>
</feature>
<comment type="function">
    <text evidence="1">Part of the DNA-dependent RNA polymerase which catalyzes the transcription of viral DNA into RNA using the four ribonucleoside triphosphates as substrates. Responsible for the transcription of early, intermediate and late genes. DNA-dependent RNA polymerase associates with the early transcription factor (ETF), itself composed of OPG118 and OPG133, thereby allowing the early genes transcription. Late transcription, and probably also intermediate transcription, require newly synthesized RNA polymerase.</text>
</comment>
<comment type="catalytic activity">
    <reaction evidence="1">
        <text>RNA(n) + a ribonucleoside 5'-triphosphate = RNA(n+1) + diphosphate</text>
        <dbReference type="Rhea" id="RHEA:21248"/>
        <dbReference type="Rhea" id="RHEA-COMP:14527"/>
        <dbReference type="Rhea" id="RHEA-COMP:17342"/>
        <dbReference type="ChEBI" id="CHEBI:33019"/>
        <dbReference type="ChEBI" id="CHEBI:61557"/>
        <dbReference type="ChEBI" id="CHEBI:140395"/>
        <dbReference type="EC" id="2.7.7.6"/>
    </reaction>
</comment>
<comment type="subunit">
    <text evidence="1">The DNA-dependent RNA polymerase used for intermediate and late genes expression consists of eight subunits Rpo30/OPG66, Rpo7/OPG90, Rpo22/OPG103, Rpo147/OPG105, Rpo18/OPG119, Rpo19/OPG131, Rpo132/OPG151 and Rpo35/OPG156. The same holoenzyme, with the addition of the transcription-specificity factor OPG109, is used for early gene expression.</text>
</comment>
<comment type="subcellular location">
    <subcellularLocation>
        <location evidence="1">Virion</location>
    </subcellularLocation>
    <text evidence="1">All the enzymes and other proteins required to synthesize early mRNAs are packaged within the virion core along with the DNA genome. This is necessary because viral early mRNAs are synthesized within minutes after virus entry into the cell and are extruded through pores in the core particle.</text>
</comment>
<comment type="similarity">
    <text evidence="2">Belongs to the poxviridae DNA-directed RNA polymerase 147 kDa subunit family.</text>
</comment>
<proteinExistence type="inferred from homology"/>